<name>GPMA_CHLFF</name>
<accession>Q256A6</accession>
<comment type="function">
    <text evidence="1">Catalyzes the interconversion of 2-phosphoglycerate and 3-phosphoglycerate.</text>
</comment>
<comment type="catalytic activity">
    <reaction evidence="1">
        <text>(2R)-2-phosphoglycerate = (2R)-3-phosphoglycerate</text>
        <dbReference type="Rhea" id="RHEA:15901"/>
        <dbReference type="ChEBI" id="CHEBI:58272"/>
        <dbReference type="ChEBI" id="CHEBI:58289"/>
        <dbReference type="EC" id="5.4.2.11"/>
    </reaction>
</comment>
<comment type="pathway">
    <text evidence="1">Carbohydrate degradation; glycolysis; pyruvate from D-glyceraldehyde 3-phosphate: step 3/5.</text>
</comment>
<comment type="similarity">
    <text evidence="1">Belongs to the phosphoglycerate mutase family. BPG-dependent PGAM subfamily.</text>
</comment>
<protein>
    <recommendedName>
        <fullName evidence="1">2,3-bisphosphoglycerate-dependent phosphoglycerate mutase</fullName>
        <shortName evidence="1">BPG-dependent PGAM</shortName>
        <shortName evidence="1">PGAM</shortName>
        <shortName evidence="1">Phosphoglyceromutase</shortName>
        <shortName evidence="1">dPGM</shortName>
        <ecNumber evidence="1">5.4.2.11</ecNumber>
    </recommendedName>
</protein>
<proteinExistence type="inferred from homology"/>
<reference key="1">
    <citation type="journal article" date="2006" name="DNA Res.">
        <title>Genome sequence of the cat pathogen, Chlamydophila felis.</title>
        <authorList>
            <person name="Azuma Y."/>
            <person name="Hirakawa H."/>
            <person name="Yamashita A."/>
            <person name="Cai Y."/>
            <person name="Rahman M.A."/>
            <person name="Suzuki H."/>
            <person name="Mitaku S."/>
            <person name="Toh H."/>
            <person name="Goto S."/>
            <person name="Murakami T."/>
            <person name="Sugi K."/>
            <person name="Hayashi H."/>
            <person name="Fukushi H."/>
            <person name="Hattori M."/>
            <person name="Kuhara S."/>
            <person name="Shirai M."/>
        </authorList>
    </citation>
    <scope>NUCLEOTIDE SEQUENCE [LARGE SCALE GENOMIC DNA]</scope>
    <source>
        <strain>Fe/C-56</strain>
    </source>
</reference>
<dbReference type="EC" id="5.4.2.11" evidence="1"/>
<dbReference type="EMBL" id="AP006861">
    <property type="protein sequence ID" value="BAE80882.1"/>
    <property type="molecule type" value="Genomic_DNA"/>
</dbReference>
<dbReference type="RefSeq" id="WP_011457667.1">
    <property type="nucleotide sequence ID" value="NC_007899.1"/>
</dbReference>
<dbReference type="SMR" id="Q256A6"/>
<dbReference type="STRING" id="264202.CF0110"/>
<dbReference type="KEGG" id="cfe:CF0110"/>
<dbReference type="eggNOG" id="COG0588">
    <property type="taxonomic scope" value="Bacteria"/>
</dbReference>
<dbReference type="HOGENOM" id="CLU_033323_1_4_0"/>
<dbReference type="OrthoDB" id="9781415at2"/>
<dbReference type="UniPathway" id="UPA00109">
    <property type="reaction ID" value="UER00186"/>
</dbReference>
<dbReference type="Proteomes" id="UP000001260">
    <property type="component" value="Chromosome"/>
</dbReference>
<dbReference type="GO" id="GO:0004619">
    <property type="term" value="F:phosphoglycerate mutase activity"/>
    <property type="evidence" value="ECO:0007669"/>
    <property type="project" value="UniProtKB-EC"/>
</dbReference>
<dbReference type="GO" id="GO:0006094">
    <property type="term" value="P:gluconeogenesis"/>
    <property type="evidence" value="ECO:0007669"/>
    <property type="project" value="UniProtKB-UniRule"/>
</dbReference>
<dbReference type="GO" id="GO:0006096">
    <property type="term" value="P:glycolytic process"/>
    <property type="evidence" value="ECO:0007669"/>
    <property type="project" value="UniProtKB-UniRule"/>
</dbReference>
<dbReference type="CDD" id="cd07067">
    <property type="entry name" value="HP_PGM_like"/>
    <property type="match status" value="1"/>
</dbReference>
<dbReference type="Gene3D" id="3.40.50.1240">
    <property type="entry name" value="Phosphoglycerate mutase-like"/>
    <property type="match status" value="1"/>
</dbReference>
<dbReference type="HAMAP" id="MF_01039">
    <property type="entry name" value="PGAM_GpmA"/>
    <property type="match status" value="1"/>
</dbReference>
<dbReference type="InterPro" id="IPR013078">
    <property type="entry name" value="His_Pase_superF_clade-1"/>
</dbReference>
<dbReference type="InterPro" id="IPR029033">
    <property type="entry name" value="His_PPase_superfam"/>
</dbReference>
<dbReference type="InterPro" id="IPR005952">
    <property type="entry name" value="Phosphogly_mut1"/>
</dbReference>
<dbReference type="NCBIfam" id="NF002217">
    <property type="entry name" value="PRK01112.1"/>
    <property type="match status" value="1"/>
</dbReference>
<dbReference type="PANTHER" id="PTHR11931">
    <property type="entry name" value="PHOSPHOGLYCERATE MUTASE"/>
    <property type="match status" value="1"/>
</dbReference>
<dbReference type="Pfam" id="PF00300">
    <property type="entry name" value="His_Phos_1"/>
    <property type="match status" value="2"/>
</dbReference>
<dbReference type="SMART" id="SM00855">
    <property type="entry name" value="PGAM"/>
    <property type="match status" value="1"/>
</dbReference>
<dbReference type="SUPFAM" id="SSF53254">
    <property type="entry name" value="Phosphoglycerate mutase-like"/>
    <property type="match status" value="1"/>
</dbReference>
<gene>
    <name evidence="1" type="primary">gpmA</name>
    <name type="ordered locus">CF0110</name>
</gene>
<organism>
    <name type="scientific">Chlamydia felis (strain Fe/C-56)</name>
    <name type="common">Chlamydophila felis</name>
    <dbReference type="NCBI Taxonomy" id="264202"/>
    <lineage>
        <taxon>Bacteria</taxon>
        <taxon>Pseudomonadati</taxon>
        <taxon>Chlamydiota</taxon>
        <taxon>Chlamydiia</taxon>
        <taxon>Chlamydiales</taxon>
        <taxon>Chlamydiaceae</taxon>
        <taxon>Chlamydia/Chlamydophila group</taxon>
        <taxon>Chlamydia</taxon>
    </lineage>
</organism>
<keyword id="KW-0312">Gluconeogenesis</keyword>
<keyword id="KW-0324">Glycolysis</keyword>
<keyword id="KW-0413">Isomerase</keyword>
<sequence length="227" mass="26107">MAFLILLRHGKSVWNEKNLFTGWVDIPLSQKGIDEAILAGQVIKDLPIDCIFTSSLVRSLMTALLAMTHHSSKKVPYIIHDAPQQKQMSRIYSEEEQHMIPLYRSSALNERMYGELQGKNKQETAEQFGEEQVKLWRRSYKIAPPKGESLYDTGQRTIPYFQETIFPLLQNSKNVFISAHGNSLRSLIMDIEKLSEEEVLSLELPTGKPLVYLWTGHTFERRPEPFG</sequence>
<evidence type="ECO:0000255" key="1">
    <source>
        <dbReference type="HAMAP-Rule" id="MF_01039"/>
    </source>
</evidence>
<feature type="chain" id="PRO_1000064046" description="2,3-bisphosphoglycerate-dependent phosphoglycerate mutase">
    <location>
        <begin position="1"/>
        <end position="227"/>
    </location>
</feature>
<feature type="active site" description="Tele-phosphohistidine intermediate" evidence="1">
    <location>
        <position position="9"/>
    </location>
</feature>
<feature type="active site" description="Proton donor/acceptor" evidence="1">
    <location>
        <position position="110"/>
    </location>
</feature>
<feature type="binding site" evidence="1">
    <location>
        <begin position="8"/>
        <end position="15"/>
    </location>
    <ligand>
        <name>substrate</name>
    </ligand>
</feature>
<feature type="binding site" evidence="1">
    <location>
        <begin position="21"/>
        <end position="22"/>
    </location>
    <ligand>
        <name>substrate</name>
    </ligand>
</feature>
<feature type="binding site" evidence="1">
    <location>
        <position position="58"/>
    </location>
    <ligand>
        <name>substrate</name>
    </ligand>
</feature>
<feature type="binding site" evidence="1">
    <location>
        <begin position="110"/>
        <end position="113"/>
    </location>
    <ligand>
        <name>substrate</name>
    </ligand>
</feature>
<feature type="binding site" evidence="1">
    <location>
        <position position="121"/>
    </location>
    <ligand>
        <name>substrate</name>
    </ligand>
</feature>
<feature type="binding site" evidence="1">
    <location>
        <begin position="137"/>
        <end position="138"/>
    </location>
    <ligand>
        <name>substrate</name>
    </ligand>
</feature>
<feature type="binding site" evidence="1">
    <location>
        <begin position="181"/>
        <end position="182"/>
    </location>
    <ligand>
        <name>substrate</name>
    </ligand>
</feature>
<feature type="site" description="Transition state stabilizer" evidence="1">
    <location>
        <position position="180"/>
    </location>
</feature>